<comment type="function">
    <text evidence="1">Plays an important role in DNA replication, recombination and repair. Binds to ssDNA and to an array of partner proteins to recruit them to their sites of action during DNA metabolism.</text>
</comment>
<comment type="subunit">
    <text evidence="1">Homotetramer.</text>
</comment>
<evidence type="ECO:0000255" key="1">
    <source>
        <dbReference type="HAMAP-Rule" id="MF_00984"/>
    </source>
</evidence>
<evidence type="ECO:0000256" key="2">
    <source>
        <dbReference type="SAM" id="MobiDB-lite"/>
    </source>
</evidence>
<name>SSB_HELHP</name>
<gene>
    <name type="primary">ssb</name>
    <name type="ordered locus">HH_0537</name>
</gene>
<protein>
    <recommendedName>
        <fullName evidence="1">Single-stranded DNA-binding protein</fullName>
        <shortName evidence="1">SSB</shortName>
    </recommendedName>
</protein>
<reference key="1">
    <citation type="journal article" date="2003" name="Proc. Natl. Acad. Sci. U.S.A.">
        <title>The complete genome sequence of the carcinogenic bacterium Helicobacter hepaticus.</title>
        <authorList>
            <person name="Suerbaum S."/>
            <person name="Josenhans C."/>
            <person name="Sterzenbach T."/>
            <person name="Drescher B."/>
            <person name="Brandt P."/>
            <person name="Bell M."/>
            <person name="Droege M."/>
            <person name="Fartmann B."/>
            <person name="Fischer H.-P."/>
            <person name="Ge Z."/>
            <person name="Hoerster A."/>
            <person name="Holland R."/>
            <person name="Klein K."/>
            <person name="Koenig J."/>
            <person name="Macko L."/>
            <person name="Mendz G.L."/>
            <person name="Nyakatura G."/>
            <person name="Schauer D.B."/>
            <person name="Shen Z."/>
            <person name="Weber J."/>
            <person name="Frosch M."/>
            <person name="Fox J.G."/>
        </authorList>
    </citation>
    <scope>NUCLEOTIDE SEQUENCE [LARGE SCALE GENOMIC DNA]</scope>
    <source>
        <strain>ATCC 51449 / 3B1</strain>
    </source>
</reference>
<proteinExistence type="inferred from homology"/>
<dbReference type="EMBL" id="AE017125">
    <property type="protein sequence ID" value="AAP77134.1"/>
    <property type="molecule type" value="Genomic_DNA"/>
</dbReference>
<dbReference type="RefSeq" id="WP_011115379.1">
    <property type="nucleotide sequence ID" value="NC_004917.1"/>
</dbReference>
<dbReference type="SMR" id="P59931"/>
<dbReference type="STRING" id="235279.HH_0537"/>
<dbReference type="KEGG" id="hhe:HH_0537"/>
<dbReference type="eggNOG" id="COG0629">
    <property type="taxonomic scope" value="Bacteria"/>
</dbReference>
<dbReference type="HOGENOM" id="CLU_078758_0_1_7"/>
<dbReference type="OrthoDB" id="9809878at2"/>
<dbReference type="Proteomes" id="UP000002495">
    <property type="component" value="Chromosome"/>
</dbReference>
<dbReference type="GO" id="GO:0009295">
    <property type="term" value="C:nucleoid"/>
    <property type="evidence" value="ECO:0007669"/>
    <property type="project" value="TreeGrafter"/>
</dbReference>
<dbReference type="GO" id="GO:0003697">
    <property type="term" value="F:single-stranded DNA binding"/>
    <property type="evidence" value="ECO:0007669"/>
    <property type="project" value="UniProtKB-UniRule"/>
</dbReference>
<dbReference type="GO" id="GO:0006310">
    <property type="term" value="P:DNA recombination"/>
    <property type="evidence" value="ECO:0007669"/>
    <property type="project" value="UniProtKB-UniRule"/>
</dbReference>
<dbReference type="GO" id="GO:0006281">
    <property type="term" value="P:DNA repair"/>
    <property type="evidence" value="ECO:0007669"/>
    <property type="project" value="UniProtKB-UniRule"/>
</dbReference>
<dbReference type="GO" id="GO:0006260">
    <property type="term" value="P:DNA replication"/>
    <property type="evidence" value="ECO:0007669"/>
    <property type="project" value="UniProtKB-UniRule"/>
</dbReference>
<dbReference type="CDD" id="cd04496">
    <property type="entry name" value="SSB_OBF"/>
    <property type="match status" value="1"/>
</dbReference>
<dbReference type="Gene3D" id="2.40.50.140">
    <property type="entry name" value="Nucleic acid-binding proteins"/>
    <property type="match status" value="1"/>
</dbReference>
<dbReference type="HAMAP" id="MF_00984">
    <property type="entry name" value="SSB"/>
    <property type="match status" value="1"/>
</dbReference>
<dbReference type="InterPro" id="IPR012340">
    <property type="entry name" value="NA-bd_OB-fold"/>
</dbReference>
<dbReference type="InterPro" id="IPR000424">
    <property type="entry name" value="Primosome_PriB/ssb"/>
</dbReference>
<dbReference type="InterPro" id="IPR011344">
    <property type="entry name" value="ssDNA-bd"/>
</dbReference>
<dbReference type="NCBIfam" id="NF006297">
    <property type="entry name" value="PRK08486.1"/>
    <property type="match status" value="1"/>
</dbReference>
<dbReference type="NCBIfam" id="TIGR00621">
    <property type="entry name" value="ssb"/>
    <property type="match status" value="1"/>
</dbReference>
<dbReference type="PANTHER" id="PTHR10302">
    <property type="entry name" value="SINGLE-STRANDED DNA-BINDING PROTEIN"/>
    <property type="match status" value="1"/>
</dbReference>
<dbReference type="PANTHER" id="PTHR10302:SF27">
    <property type="entry name" value="SINGLE-STRANDED DNA-BINDING PROTEIN"/>
    <property type="match status" value="1"/>
</dbReference>
<dbReference type="Pfam" id="PF00436">
    <property type="entry name" value="SSB"/>
    <property type="match status" value="1"/>
</dbReference>
<dbReference type="PIRSF" id="PIRSF002070">
    <property type="entry name" value="SSB"/>
    <property type="match status" value="1"/>
</dbReference>
<dbReference type="SUPFAM" id="SSF50249">
    <property type="entry name" value="Nucleic acid-binding proteins"/>
    <property type="match status" value="1"/>
</dbReference>
<dbReference type="PROSITE" id="PS50935">
    <property type="entry name" value="SSB"/>
    <property type="match status" value="1"/>
</dbReference>
<feature type="chain" id="PRO_0000096049" description="Single-stranded DNA-binding protein">
    <location>
        <begin position="1"/>
        <end position="170"/>
    </location>
</feature>
<feature type="domain" description="SSB" evidence="1">
    <location>
        <begin position="1"/>
        <end position="106"/>
    </location>
</feature>
<feature type="region of interest" description="Disordered" evidence="2">
    <location>
        <begin position="88"/>
        <end position="170"/>
    </location>
</feature>
<feature type="short sequence motif" description="Important for interaction with partner proteins" evidence="1">
    <location>
        <begin position="165"/>
        <end position="170"/>
    </location>
</feature>
<feature type="compositionally biased region" description="Polar residues" evidence="2">
    <location>
        <begin position="88"/>
        <end position="101"/>
    </location>
</feature>
<feature type="compositionally biased region" description="Polar residues" evidence="2">
    <location>
        <begin position="115"/>
        <end position="156"/>
    </location>
</feature>
<keyword id="KW-0227">DNA damage</keyword>
<keyword id="KW-0233">DNA recombination</keyword>
<keyword id="KW-0234">DNA repair</keyword>
<keyword id="KW-0235">DNA replication</keyword>
<keyword id="KW-0238">DNA-binding</keyword>
<keyword id="KW-1185">Reference proteome</keyword>
<accession>P59931</accession>
<accession>Q7VIR7</accession>
<organism>
    <name type="scientific">Helicobacter hepaticus (strain ATCC 51449 / 3B1)</name>
    <dbReference type="NCBI Taxonomy" id="235279"/>
    <lineage>
        <taxon>Bacteria</taxon>
        <taxon>Pseudomonadati</taxon>
        <taxon>Campylobacterota</taxon>
        <taxon>Epsilonproteobacteria</taxon>
        <taxon>Campylobacterales</taxon>
        <taxon>Helicobacteraceae</taxon>
        <taxon>Helicobacter</taxon>
    </lineage>
</organism>
<sequence length="170" mass="18849">MYNKVIIIGNLTRDVELRYLPSGSALATIGLASNRRFKKQDGSQGEEVCFIDVKLFGRSAEVANQYLRKGSKILIEGRLSLESWNDQSGAKRSRHTITAESMQMLDSKPSGDENPYNNTNASNTGMQHNTNNSPNYNQTHSQPQGNGNIGTGNYPQNIPEINIDDEDIPF</sequence>